<feature type="chain" id="PRO_0000111630" description="Ribonuclease HII">
    <location>
        <begin position="1"/>
        <end position="253"/>
    </location>
</feature>
<feature type="domain" description="RNase H type-2" evidence="2">
    <location>
        <begin position="70"/>
        <end position="253"/>
    </location>
</feature>
<feature type="binding site" evidence="1">
    <location>
        <position position="76"/>
    </location>
    <ligand>
        <name>a divalent metal cation</name>
        <dbReference type="ChEBI" id="CHEBI:60240"/>
    </ligand>
</feature>
<feature type="binding site" evidence="1">
    <location>
        <position position="77"/>
    </location>
    <ligand>
        <name>a divalent metal cation</name>
        <dbReference type="ChEBI" id="CHEBI:60240"/>
    </ligand>
</feature>
<feature type="binding site" evidence="1">
    <location>
        <position position="168"/>
    </location>
    <ligand>
        <name>a divalent metal cation</name>
        <dbReference type="ChEBI" id="CHEBI:60240"/>
    </ligand>
</feature>
<dbReference type="EC" id="3.1.26.4" evidence="1"/>
<dbReference type="EMBL" id="AE009948">
    <property type="protein sequence ID" value="AAM99895.1"/>
    <property type="molecule type" value="Genomic_DNA"/>
</dbReference>
<dbReference type="RefSeq" id="NP_688023.1">
    <property type="nucleotide sequence ID" value="NC_004116.1"/>
</dbReference>
<dbReference type="RefSeq" id="WP_000201088.1">
    <property type="nucleotide sequence ID" value="NC_004116.1"/>
</dbReference>
<dbReference type="SMR" id="Q8DZT5"/>
<dbReference type="STRING" id="208435.SAG1012"/>
<dbReference type="KEGG" id="sag:SAG1012"/>
<dbReference type="PATRIC" id="fig|208435.3.peg.1019"/>
<dbReference type="HOGENOM" id="CLU_036532_2_1_9"/>
<dbReference type="OrthoDB" id="9803420at2"/>
<dbReference type="Proteomes" id="UP000000821">
    <property type="component" value="Chromosome"/>
</dbReference>
<dbReference type="GO" id="GO:0005737">
    <property type="term" value="C:cytoplasm"/>
    <property type="evidence" value="ECO:0007669"/>
    <property type="project" value="UniProtKB-SubCell"/>
</dbReference>
<dbReference type="GO" id="GO:0032299">
    <property type="term" value="C:ribonuclease H2 complex"/>
    <property type="evidence" value="ECO:0007669"/>
    <property type="project" value="TreeGrafter"/>
</dbReference>
<dbReference type="GO" id="GO:0030145">
    <property type="term" value="F:manganese ion binding"/>
    <property type="evidence" value="ECO:0007669"/>
    <property type="project" value="UniProtKB-UniRule"/>
</dbReference>
<dbReference type="GO" id="GO:0003723">
    <property type="term" value="F:RNA binding"/>
    <property type="evidence" value="ECO:0007669"/>
    <property type="project" value="InterPro"/>
</dbReference>
<dbReference type="GO" id="GO:0004523">
    <property type="term" value="F:RNA-DNA hybrid ribonuclease activity"/>
    <property type="evidence" value="ECO:0007669"/>
    <property type="project" value="UniProtKB-UniRule"/>
</dbReference>
<dbReference type="GO" id="GO:0043137">
    <property type="term" value="P:DNA replication, removal of RNA primer"/>
    <property type="evidence" value="ECO:0007669"/>
    <property type="project" value="TreeGrafter"/>
</dbReference>
<dbReference type="GO" id="GO:0006298">
    <property type="term" value="P:mismatch repair"/>
    <property type="evidence" value="ECO:0007669"/>
    <property type="project" value="TreeGrafter"/>
</dbReference>
<dbReference type="CDD" id="cd07182">
    <property type="entry name" value="RNase_HII_bacteria_HII_like"/>
    <property type="match status" value="1"/>
</dbReference>
<dbReference type="FunFam" id="3.30.420.10:FF:000006">
    <property type="entry name" value="Ribonuclease HII"/>
    <property type="match status" value="1"/>
</dbReference>
<dbReference type="Gene3D" id="3.30.420.10">
    <property type="entry name" value="Ribonuclease H-like superfamily/Ribonuclease H"/>
    <property type="match status" value="1"/>
</dbReference>
<dbReference type="HAMAP" id="MF_00052_B">
    <property type="entry name" value="RNase_HII_B"/>
    <property type="match status" value="1"/>
</dbReference>
<dbReference type="InterPro" id="IPR022898">
    <property type="entry name" value="RNase_HII"/>
</dbReference>
<dbReference type="InterPro" id="IPR001352">
    <property type="entry name" value="RNase_HII/HIII"/>
</dbReference>
<dbReference type="InterPro" id="IPR024567">
    <property type="entry name" value="RNase_HII/HIII_dom"/>
</dbReference>
<dbReference type="InterPro" id="IPR012337">
    <property type="entry name" value="RNaseH-like_sf"/>
</dbReference>
<dbReference type="InterPro" id="IPR036397">
    <property type="entry name" value="RNaseH_sf"/>
</dbReference>
<dbReference type="NCBIfam" id="NF000594">
    <property type="entry name" value="PRK00015.1-1"/>
    <property type="match status" value="1"/>
</dbReference>
<dbReference type="NCBIfam" id="NF000595">
    <property type="entry name" value="PRK00015.1-3"/>
    <property type="match status" value="1"/>
</dbReference>
<dbReference type="PANTHER" id="PTHR10954">
    <property type="entry name" value="RIBONUCLEASE H2 SUBUNIT A"/>
    <property type="match status" value="1"/>
</dbReference>
<dbReference type="PANTHER" id="PTHR10954:SF18">
    <property type="entry name" value="RIBONUCLEASE HII"/>
    <property type="match status" value="1"/>
</dbReference>
<dbReference type="Pfam" id="PF01351">
    <property type="entry name" value="RNase_HII"/>
    <property type="match status" value="1"/>
</dbReference>
<dbReference type="SUPFAM" id="SSF53098">
    <property type="entry name" value="Ribonuclease H-like"/>
    <property type="match status" value="1"/>
</dbReference>
<dbReference type="PROSITE" id="PS51975">
    <property type="entry name" value="RNASE_H_2"/>
    <property type="match status" value="1"/>
</dbReference>
<accession>Q8DZT5</accession>
<proteinExistence type="inferred from homology"/>
<gene>
    <name evidence="1" type="primary">rnhB</name>
    <name type="ordered locus">SAG1012</name>
</gene>
<comment type="function">
    <text evidence="1">Endonuclease that specifically degrades the RNA of RNA-DNA hybrids.</text>
</comment>
<comment type="catalytic activity">
    <reaction evidence="1">
        <text>Endonucleolytic cleavage to 5'-phosphomonoester.</text>
        <dbReference type="EC" id="3.1.26.4"/>
    </reaction>
</comment>
<comment type="cofactor">
    <cofactor evidence="1">
        <name>Mn(2+)</name>
        <dbReference type="ChEBI" id="CHEBI:29035"/>
    </cofactor>
    <cofactor evidence="1">
        <name>Mg(2+)</name>
        <dbReference type="ChEBI" id="CHEBI:18420"/>
    </cofactor>
    <text evidence="1">Manganese or magnesium. Binds 1 divalent metal ion per monomer in the absence of substrate. May bind a second metal ion after substrate binding.</text>
</comment>
<comment type="subcellular location">
    <subcellularLocation>
        <location evidence="1">Cytoplasm</location>
    </subcellularLocation>
</comment>
<comment type="similarity">
    <text evidence="1">Belongs to the RNase HII family.</text>
</comment>
<protein>
    <recommendedName>
        <fullName evidence="1">Ribonuclease HII</fullName>
        <shortName evidence="1">RNase HII</shortName>
        <ecNumber evidence="1">3.1.26.4</ecNumber>
    </recommendedName>
</protein>
<name>RNH2_STRA5</name>
<reference key="1">
    <citation type="journal article" date="2002" name="Proc. Natl. Acad. Sci. U.S.A.">
        <title>Complete genome sequence and comparative genomic analysis of an emerging human pathogen, serotype V Streptococcus agalactiae.</title>
        <authorList>
            <person name="Tettelin H."/>
            <person name="Masignani V."/>
            <person name="Cieslewicz M.J."/>
            <person name="Eisen J.A."/>
            <person name="Peterson S.N."/>
            <person name="Wessels M.R."/>
            <person name="Paulsen I.T."/>
            <person name="Nelson K.E."/>
            <person name="Margarit I."/>
            <person name="Read T.D."/>
            <person name="Madoff L.C."/>
            <person name="Wolf A.M."/>
            <person name="Beanan M.J."/>
            <person name="Brinkac L.M."/>
            <person name="Daugherty S.C."/>
            <person name="DeBoy R.T."/>
            <person name="Durkin A.S."/>
            <person name="Kolonay J.F."/>
            <person name="Madupu R."/>
            <person name="Lewis M.R."/>
            <person name="Radune D."/>
            <person name="Fedorova N.B."/>
            <person name="Scanlan D."/>
            <person name="Khouri H.M."/>
            <person name="Mulligan S."/>
            <person name="Carty H.A."/>
            <person name="Cline R.T."/>
            <person name="Van Aken S.E."/>
            <person name="Gill J."/>
            <person name="Scarselli M."/>
            <person name="Mora M."/>
            <person name="Iacobini E.T."/>
            <person name="Brettoni C."/>
            <person name="Galli G."/>
            <person name="Mariani M."/>
            <person name="Vegni F."/>
            <person name="Maione D."/>
            <person name="Rinaudo D."/>
            <person name="Rappuoli R."/>
            <person name="Telford J.L."/>
            <person name="Kasper D.L."/>
            <person name="Grandi G."/>
            <person name="Fraser C.M."/>
        </authorList>
    </citation>
    <scope>NUCLEOTIDE SEQUENCE [LARGE SCALE GENOMIC DNA]</scope>
    <source>
        <strain>ATCC BAA-611 / 2603 V/R</strain>
    </source>
</reference>
<organism>
    <name type="scientific">Streptococcus agalactiae serotype V (strain ATCC BAA-611 / 2603 V/R)</name>
    <dbReference type="NCBI Taxonomy" id="208435"/>
    <lineage>
        <taxon>Bacteria</taxon>
        <taxon>Bacillati</taxon>
        <taxon>Bacillota</taxon>
        <taxon>Bacilli</taxon>
        <taxon>Lactobacillales</taxon>
        <taxon>Streptococcaceae</taxon>
        <taxon>Streptococcus</taxon>
    </lineage>
</organism>
<keyword id="KW-0963">Cytoplasm</keyword>
<keyword id="KW-0255">Endonuclease</keyword>
<keyword id="KW-0378">Hydrolase</keyword>
<keyword id="KW-0464">Manganese</keyword>
<keyword id="KW-0479">Metal-binding</keyword>
<keyword id="KW-0540">Nuclease</keyword>
<keyword id="KW-1185">Reference proteome</keyword>
<sequence length="253" mass="28155">MATIKEIKAILETIVDLKDKRWQEYQTDSRAGVQKAILQRKKNIQSDLDEEARLEQMLVYEKKLYIEHINLIAGIDEVGRGPLAGPVVAAAVILPPNCKIKHLNDSKKIPKKKHQEIYQNILDQALAVGIGIQDSQCIDDINIYEATKHAMIDAVSHLSVAPEHLLIDAMVLDLSIPQTKIIKGDANSLSIAAASIVAKVTRDKIMSDYDSTYPGYAFSKNAGYGTKEHLEGLQKYGITPIHRKSFEPIKSML</sequence>
<evidence type="ECO:0000255" key="1">
    <source>
        <dbReference type="HAMAP-Rule" id="MF_00052"/>
    </source>
</evidence>
<evidence type="ECO:0000255" key="2">
    <source>
        <dbReference type="PROSITE-ProRule" id="PRU01319"/>
    </source>
</evidence>